<organism>
    <name type="scientific">Limanda limanda</name>
    <name type="common">Common dab</name>
    <name type="synonym">Pleuronectes limanda</name>
    <dbReference type="NCBI Taxonomy" id="27771"/>
    <lineage>
        <taxon>Eukaryota</taxon>
        <taxon>Metazoa</taxon>
        <taxon>Chordata</taxon>
        <taxon>Craniata</taxon>
        <taxon>Vertebrata</taxon>
        <taxon>Euteleostomi</taxon>
        <taxon>Actinopterygii</taxon>
        <taxon>Neopterygii</taxon>
        <taxon>Teleostei</taxon>
        <taxon>Neoteleostei</taxon>
        <taxon>Acanthomorphata</taxon>
        <taxon>Carangaria</taxon>
        <taxon>Pleuronectiformes</taxon>
        <taxon>Pleuronectoidei</taxon>
        <taxon>Pleuronectidae</taxon>
        <taxon>Limanda</taxon>
    </lineage>
</organism>
<protein>
    <recommendedName>
        <fullName>Ras-like protein</fullName>
        <ecNumber evidence="2">3.6.5.2</ecNumber>
    </recommendedName>
</protein>
<dbReference type="EC" id="3.6.5.2" evidence="2"/>
<dbReference type="EMBL" id="X98859">
    <property type="protein sequence ID" value="CAA67365.1"/>
    <property type="molecule type" value="Genomic_DNA"/>
</dbReference>
<dbReference type="SMR" id="Q91079"/>
<dbReference type="GO" id="GO:0005886">
    <property type="term" value="C:plasma membrane"/>
    <property type="evidence" value="ECO:0007669"/>
    <property type="project" value="UniProtKB-SubCell"/>
</dbReference>
<dbReference type="GO" id="GO:0003925">
    <property type="term" value="F:G protein activity"/>
    <property type="evidence" value="ECO:0007669"/>
    <property type="project" value="UniProtKB-EC"/>
</dbReference>
<dbReference type="GO" id="GO:0005525">
    <property type="term" value="F:GTP binding"/>
    <property type="evidence" value="ECO:0007669"/>
    <property type="project" value="UniProtKB-KW"/>
</dbReference>
<dbReference type="GO" id="GO:0007165">
    <property type="term" value="P:signal transduction"/>
    <property type="evidence" value="ECO:0007669"/>
    <property type="project" value="InterPro"/>
</dbReference>
<dbReference type="Gene3D" id="3.40.50.300">
    <property type="entry name" value="P-loop containing nucleotide triphosphate hydrolases"/>
    <property type="match status" value="1"/>
</dbReference>
<dbReference type="InterPro" id="IPR027417">
    <property type="entry name" value="P-loop_NTPase"/>
</dbReference>
<dbReference type="InterPro" id="IPR005225">
    <property type="entry name" value="Small_GTP-bd"/>
</dbReference>
<dbReference type="InterPro" id="IPR001806">
    <property type="entry name" value="Small_GTPase"/>
</dbReference>
<dbReference type="InterPro" id="IPR020849">
    <property type="entry name" value="Small_GTPase_Ras-type"/>
</dbReference>
<dbReference type="NCBIfam" id="TIGR00231">
    <property type="entry name" value="small_GTP"/>
    <property type="match status" value="1"/>
</dbReference>
<dbReference type="PANTHER" id="PTHR24070">
    <property type="entry name" value="RAS, DI-RAS, AND RHEB FAMILY MEMBERS OF SMALL GTPASE SUPERFAMILY"/>
    <property type="match status" value="1"/>
</dbReference>
<dbReference type="Pfam" id="PF00071">
    <property type="entry name" value="Ras"/>
    <property type="match status" value="1"/>
</dbReference>
<dbReference type="PRINTS" id="PR00449">
    <property type="entry name" value="RASTRNSFRMNG"/>
</dbReference>
<dbReference type="SMART" id="SM00175">
    <property type="entry name" value="RAB"/>
    <property type="match status" value="1"/>
</dbReference>
<dbReference type="SMART" id="SM00173">
    <property type="entry name" value="RAS"/>
    <property type="match status" value="1"/>
</dbReference>
<dbReference type="SUPFAM" id="SSF52540">
    <property type="entry name" value="P-loop containing nucleoside triphosphate hydrolases"/>
    <property type="match status" value="1"/>
</dbReference>
<dbReference type="PROSITE" id="PS51421">
    <property type="entry name" value="RAS"/>
    <property type="match status" value="1"/>
</dbReference>
<gene>
    <name type="primary">ras</name>
</gene>
<accession>Q91079</accession>
<feature type="chain" id="PRO_0000082659" description="Ras-like protein">
    <location>
        <begin position="1"/>
        <end position="93" status="greater than"/>
    </location>
</feature>
<feature type="short sequence motif" description="Effector region">
    <location>
        <begin position="28"/>
        <end position="36"/>
    </location>
</feature>
<feature type="binding site" evidence="1">
    <location>
        <begin position="6"/>
        <end position="13"/>
    </location>
    <ligand>
        <name>GTP</name>
        <dbReference type="ChEBI" id="CHEBI:37565"/>
    </ligand>
</feature>
<feature type="binding site" evidence="1">
    <location>
        <begin position="53"/>
        <end position="57"/>
    </location>
    <ligand>
        <name>GTP</name>
        <dbReference type="ChEBI" id="CHEBI:37565"/>
    </ligand>
</feature>
<feature type="non-terminal residue">
    <location>
        <position position="93"/>
    </location>
</feature>
<evidence type="ECO:0000250" key="1"/>
<evidence type="ECO:0000250" key="2">
    <source>
        <dbReference type="UniProtKB" id="P01112"/>
    </source>
</evidence>
<evidence type="ECO:0000305" key="3"/>
<sequence>MLVVVGAGGVGKSALTIQLIQNHFVDEYDPTIEGIRPKQVVIDGETCLLDILDTAGQEEYSAMRDQYMRTGEGFLCVFAINNTKSFEDIHHYR</sequence>
<reference key="1">
    <citation type="journal article" date="1995" name="Mar. Pollut. Bull.">
        <title>Isolation and characterization of the dab (Limanda limanda) ras gene.</title>
        <authorList>
            <person name="Rotchell J.M."/>
            <person name="Craft J.A."/>
            <person name="Stagg R.M."/>
        </authorList>
    </citation>
    <scope>NUCLEOTIDE SEQUENCE [GENOMIC DNA]</scope>
    <source>
        <tissue>Liver</tissue>
    </source>
</reference>
<comment type="function">
    <text>Ras proteins bind GDP/GTP and possess intrinsic GTPase activity.</text>
</comment>
<comment type="catalytic activity">
    <reaction evidence="2">
        <text>GTP + H2O = GDP + phosphate + H(+)</text>
        <dbReference type="Rhea" id="RHEA:19669"/>
        <dbReference type="ChEBI" id="CHEBI:15377"/>
        <dbReference type="ChEBI" id="CHEBI:15378"/>
        <dbReference type="ChEBI" id="CHEBI:37565"/>
        <dbReference type="ChEBI" id="CHEBI:43474"/>
        <dbReference type="ChEBI" id="CHEBI:58189"/>
        <dbReference type="EC" id="3.6.5.2"/>
    </reaction>
</comment>
<comment type="activity regulation">
    <text>Alternates between an inactive form bound to GDP and an active form bound to GTP. Activated by a guanine nucleotide-exchange factor (GEF) and inactivated by a GTPase-activating protein (GAP).</text>
</comment>
<comment type="subcellular location">
    <subcellularLocation>
        <location>Cell membrane</location>
        <topology>Lipid-anchor</topology>
        <orientation>Cytoplasmic side</orientation>
    </subcellularLocation>
    <text>Inner surface of plasma membrane.</text>
</comment>
<comment type="similarity">
    <text evidence="3">Belongs to the small GTPase superfamily. Ras family.</text>
</comment>
<name>RAS_LIMLI</name>
<keyword id="KW-1003">Cell membrane</keyword>
<keyword id="KW-0342">GTP-binding</keyword>
<keyword id="KW-0378">Hydrolase</keyword>
<keyword id="KW-0449">Lipoprotein</keyword>
<keyword id="KW-0472">Membrane</keyword>
<keyword id="KW-0547">Nucleotide-binding</keyword>
<keyword id="KW-0636">Prenylation</keyword>
<proteinExistence type="inferred from homology"/>